<reference key="1">
    <citation type="journal article" date="1997" name="Mol. Phylogenet. Evol.">
        <title>Correlation of functional domains and rates of nucleotide substitution in cytochrome b.</title>
        <authorList>
            <person name="Griffiths C.S."/>
        </authorList>
    </citation>
    <scope>NUCLEOTIDE SEQUENCE [GENOMIC DNA]</scope>
</reference>
<organism>
    <name type="scientific">Caracara plancus</name>
    <name type="common">Southern caracara</name>
    <name type="synonym">Polyborus plancus</name>
    <dbReference type="NCBI Taxonomy" id="8951"/>
    <lineage>
        <taxon>Eukaryota</taxon>
        <taxon>Metazoa</taxon>
        <taxon>Chordata</taxon>
        <taxon>Craniata</taxon>
        <taxon>Vertebrata</taxon>
        <taxon>Euteleostomi</taxon>
        <taxon>Archelosauria</taxon>
        <taxon>Archosauria</taxon>
        <taxon>Dinosauria</taxon>
        <taxon>Saurischia</taxon>
        <taxon>Theropoda</taxon>
        <taxon>Coelurosauria</taxon>
        <taxon>Aves</taxon>
        <taxon>Neognathae</taxon>
        <taxon>Neoaves</taxon>
        <taxon>Telluraves</taxon>
        <taxon>Australaves</taxon>
        <taxon>Falconiformes</taxon>
        <taxon>Falconidae</taxon>
        <taxon>Caracara</taxon>
    </lineage>
</organism>
<accession>O21224</accession>
<comment type="function">
    <text evidence="2">Component of the ubiquinol-cytochrome c reductase complex (complex III or cytochrome b-c1 complex) that is part of the mitochondrial respiratory chain. The b-c1 complex mediates electron transfer from ubiquinol to cytochrome c. Contributes to the generation of a proton gradient across the mitochondrial membrane that is then used for ATP synthesis.</text>
</comment>
<comment type="cofactor">
    <cofactor evidence="2">
        <name>heme b</name>
        <dbReference type="ChEBI" id="CHEBI:60344"/>
    </cofactor>
    <text evidence="2">Binds 2 heme b groups non-covalently.</text>
</comment>
<comment type="subunit">
    <text evidence="2">The cytochrome bc1 complex contains 11 subunits: 3 respiratory subunits (MT-CYB, CYC1 and UQCRFS1), 2 core proteins (UQCRC1 and UQCRC2) and 6 low-molecular weight proteins (UQCRH/QCR6, UQCRB/QCR7, UQCRQ/QCR8, UQCR10/QCR9, UQCR11/QCR10 and a cleavage product of UQCRFS1). This cytochrome bc1 complex then forms a dimer.</text>
</comment>
<comment type="subcellular location">
    <subcellularLocation>
        <location evidence="2">Mitochondrion inner membrane</location>
        <topology evidence="2">Multi-pass membrane protein</topology>
    </subcellularLocation>
</comment>
<comment type="miscellaneous">
    <text evidence="1">Heme 1 (or BL or b562) is low-potential and absorbs at about 562 nm, and heme 2 (or BH or b566) is high-potential and absorbs at about 566 nm.</text>
</comment>
<comment type="similarity">
    <text evidence="3 4">Belongs to the cytochrome b family.</text>
</comment>
<comment type="caution">
    <text evidence="2">The full-length protein contains only eight transmembrane helices, not nine as predicted by bioinformatics tools.</text>
</comment>
<name>CYB_CARPF</name>
<dbReference type="EMBL" id="U83313">
    <property type="protein sequence ID" value="AAC60242.1"/>
    <property type="molecule type" value="Genomic_DNA"/>
</dbReference>
<dbReference type="SMR" id="O21224"/>
<dbReference type="GO" id="GO:0005743">
    <property type="term" value="C:mitochondrial inner membrane"/>
    <property type="evidence" value="ECO:0007669"/>
    <property type="project" value="UniProtKB-SubCell"/>
</dbReference>
<dbReference type="GO" id="GO:0045275">
    <property type="term" value="C:respiratory chain complex III"/>
    <property type="evidence" value="ECO:0007669"/>
    <property type="project" value="InterPro"/>
</dbReference>
<dbReference type="GO" id="GO:0046872">
    <property type="term" value="F:metal ion binding"/>
    <property type="evidence" value="ECO:0007669"/>
    <property type="project" value="UniProtKB-KW"/>
</dbReference>
<dbReference type="GO" id="GO:0008121">
    <property type="term" value="F:ubiquinol-cytochrome-c reductase activity"/>
    <property type="evidence" value="ECO:0007669"/>
    <property type="project" value="InterPro"/>
</dbReference>
<dbReference type="GO" id="GO:0006122">
    <property type="term" value="P:mitochondrial electron transport, ubiquinol to cytochrome c"/>
    <property type="evidence" value="ECO:0007669"/>
    <property type="project" value="TreeGrafter"/>
</dbReference>
<dbReference type="CDD" id="cd00290">
    <property type="entry name" value="cytochrome_b_C"/>
    <property type="match status" value="1"/>
</dbReference>
<dbReference type="CDD" id="cd00284">
    <property type="entry name" value="Cytochrome_b_N"/>
    <property type="match status" value="1"/>
</dbReference>
<dbReference type="FunFam" id="1.20.810.10:FF:000002">
    <property type="entry name" value="Cytochrome b"/>
    <property type="match status" value="1"/>
</dbReference>
<dbReference type="Gene3D" id="1.20.810.10">
    <property type="entry name" value="Cytochrome Bc1 Complex, Chain C"/>
    <property type="match status" value="1"/>
</dbReference>
<dbReference type="InterPro" id="IPR005798">
    <property type="entry name" value="Cyt_b/b6_C"/>
</dbReference>
<dbReference type="InterPro" id="IPR036150">
    <property type="entry name" value="Cyt_b/b6_C_sf"/>
</dbReference>
<dbReference type="InterPro" id="IPR005797">
    <property type="entry name" value="Cyt_b/b6_N"/>
</dbReference>
<dbReference type="InterPro" id="IPR027387">
    <property type="entry name" value="Cytb/b6-like_sf"/>
</dbReference>
<dbReference type="InterPro" id="IPR030689">
    <property type="entry name" value="Cytochrome_b"/>
</dbReference>
<dbReference type="InterPro" id="IPR048260">
    <property type="entry name" value="Cytochrome_b_C_euk/bac"/>
</dbReference>
<dbReference type="InterPro" id="IPR048259">
    <property type="entry name" value="Cytochrome_b_N_euk/bac"/>
</dbReference>
<dbReference type="InterPro" id="IPR016174">
    <property type="entry name" value="Di-haem_cyt_TM"/>
</dbReference>
<dbReference type="PANTHER" id="PTHR19271">
    <property type="entry name" value="CYTOCHROME B"/>
    <property type="match status" value="1"/>
</dbReference>
<dbReference type="PANTHER" id="PTHR19271:SF16">
    <property type="entry name" value="CYTOCHROME B"/>
    <property type="match status" value="1"/>
</dbReference>
<dbReference type="Pfam" id="PF00032">
    <property type="entry name" value="Cytochrom_B_C"/>
    <property type="match status" value="1"/>
</dbReference>
<dbReference type="Pfam" id="PF00033">
    <property type="entry name" value="Cytochrome_B"/>
    <property type="match status" value="1"/>
</dbReference>
<dbReference type="PIRSF" id="PIRSF038885">
    <property type="entry name" value="COB"/>
    <property type="match status" value="1"/>
</dbReference>
<dbReference type="SUPFAM" id="SSF81648">
    <property type="entry name" value="a domain/subunit of cytochrome bc1 complex (Ubiquinol-cytochrome c reductase)"/>
    <property type="match status" value="1"/>
</dbReference>
<dbReference type="SUPFAM" id="SSF81342">
    <property type="entry name" value="Transmembrane di-heme cytochromes"/>
    <property type="match status" value="1"/>
</dbReference>
<dbReference type="PROSITE" id="PS51003">
    <property type="entry name" value="CYTB_CTER"/>
    <property type="match status" value="1"/>
</dbReference>
<dbReference type="PROSITE" id="PS51002">
    <property type="entry name" value="CYTB_NTER"/>
    <property type="match status" value="1"/>
</dbReference>
<protein>
    <recommendedName>
        <fullName>Cytochrome b</fullName>
    </recommendedName>
    <alternativeName>
        <fullName>Complex III subunit 3</fullName>
    </alternativeName>
    <alternativeName>
        <fullName>Complex III subunit III</fullName>
    </alternativeName>
    <alternativeName>
        <fullName>Cytochrome b-c1 complex subunit 3</fullName>
    </alternativeName>
    <alternativeName>
        <fullName>Ubiquinol-cytochrome-c reductase complex cytochrome b subunit</fullName>
    </alternativeName>
</protein>
<keyword id="KW-0249">Electron transport</keyword>
<keyword id="KW-0349">Heme</keyword>
<keyword id="KW-0408">Iron</keyword>
<keyword id="KW-0472">Membrane</keyword>
<keyword id="KW-0479">Metal-binding</keyword>
<keyword id="KW-0496">Mitochondrion</keyword>
<keyword id="KW-0999">Mitochondrion inner membrane</keyword>
<keyword id="KW-0679">Respiratory chain</keyword>
<keyword id="KW-0812">Transmembrane</keyword>
<keyword id="KW-1133">Transmembrane helix</keyword>
<keyword id="KW-0813">Transport</keyword>
<keyword id="KW-0830">Ubiquinone</keyword>
<gene>
    <name type="primary">MT-CYB</name>
    <name type="synonym">COB</name>
    <name type="synonym">CYTB</name>
    <name type="synonym">MTCYB</name>
</gene>
<feature type="chain" id="PRO_0000061423" description="Cytochrome b">
    <location>
        <begin position="1"/>
        <end position="380"/>
    </location>
</feature>
<feature type="transmembrane region" description="Helical" evidence="2">
    <location>
        <begin position="34"/>
        <end position="54"/>
    </location>
</feature>
<feature type="transmembrane region" description="Helical" evidence="2">
    <location>
        <begin position="78"/>
        <end position="99"/>
    </location>
</feature>
<feature type="transmembrane region" description="Helical" evidence="2">
    <location>
        <begin position="114"/>
        <end position="134"/>
    </location>
</feature>
<feature type="transmembrane region" description="Helical" evidence="2">
    <location>
        <begin position="179"/>
        <end position="199"/>
    </location>
</feature>
<feature type="transmembrane region" description="Helical" evidence="2">
    <location>
        <begin position="227"/>
        <end position="247"/>
    </location>
</feature>
<feature type="transmembrane region" description="Helical" evidence="2">
    <location>
        <begin position="289"/>
        <end position="309"/>
    </location>
</feature>
<feature type="transmembrane region" description="Helical" evidence="2">
    <location>
        <begin position="321"/>
        <end position="341"/>
    </location>
</feature>
<feature type="transmembrane region" description="Helical" evidence="2">
    <location>
        <begin position="348"/>
        <end position="368"/>
    </location>
</feature>
<feature type="binding site" description="axial binding residue" evidence="2">
    <location>
        <position position="84"/>
    </location>
    <ligand>
        <name>heme b</name>
        <dbReference type="ChEBI" id="CHEBI:60344"/>
        <label>b562</label>
    </ligand>
    <ligandPart>
        <name>Fe</name>
        <dbReference type="ChEBI" id="CHEBI:18248"/>
    </ligandPart>
</feature>
<feature type="binding site" description="axial binding residue" evidence="2">
    <location>
        <position position="98"/>
    </location>
    <ligand>
        <name>heme b</name>
        <dbReference type="ChEBI" id="CHEBI:60344"/>
        <label>b566</label>
    </ligand>
    <ligandPart>
        <name>Fe</name>
        <dbReference type="ChEBI" id="CHEBI:18248"/>
    </ligandPart>
</feature>
<feature type="binding site" description="axial binding residue" evidence="2">
    <location>
        <position position="183"/>
    </location>
    <ligand>
        <name>heme b</name>
        <dbReference type="ChEBI" id="CHEBI:60344"/>
        <label>b562</label>
    </ligand>
    <ligandPart>
        <name>Fe</name>
        <dbReference type="ChEBI" id="CHEBI:18248"/>
    </ligandPart>
</feature>
<feature type="binding site" description="axial binding residue" evidence="2">
    <location>
        <position position="197"/>
    </location>
    <ligand>
        <name>heme b</name>
        <dbReference type="ChEBI" id="CHEBI:60344"/>
        <label>b566</label>
    </ligand>
    <ligandPart>
        <name>Fe</name>
        <dbReference type="ChEBI" id="CHEBI:18248"/>
    </ligandPart>
</feature>
<feature type="binding site" evidence="2">
    <location>
        <position position="202"/>
    </location>
    <ligand>
        <name>a ubiquinone</name>
        <dbReference type="ChEBI" id="CHEBI:16389"/>
    </ligand>
</feature>
<sequence>MAPNIRKSHPLLKMVNNSLIDLPTPSNISAWWNFGSLLGICLVTQILTGLLLAMHYTADTNLAFSSVSHTCRNVQYGWLIRNLHANGASLFFICIYMHIGRGIYYGSYLYKETWNTGIILLLTLMATAFVGYVLPWGQMSFWGATVITNLFSAIPYIGQTLVEWAWGGFSVDNPTLTRFFALHFLLPFLIAGLTLIHLTFLHESGSNNPLGITSNCDKIPFHPYFSSKDILGFMLLYFLLTTLALFSPNLLGDPENFTPANPLVTPPHIKPEWYFLFAYAILRSIPNKLGGVLALAASILILFLSPFLHKSKQRTMTFRPLSQMLFWLLVTNLLILTWIGSQPVEHPFIIIGQLASLTYFTILLILLPLTGALENKILNY</sequence>
<proteinExistence type="inferred from homology"/>
<geneLocation type="mitochondrion"/>
<evidence type="ECO:0000250" key="1"/>
<evidence type="ECO:0000250" key="2">
    <source>
        <dbReference type="UniProtKB" id="P00157"/>
    </source>
</evidence>
<evidence type="ECO:0000255" key="3">
    <source>
        <dbReference type="PROSITE-ProRule" id="PRU00967"/>
    </source>
</evidence>
<evidence type="ECO:0000255" key="4">
    <source>
        <dbReference type="PROSITE-ProRule" id="PRU00968"/>
    </source>
</evidence>